<comment type="function">
    <text evidence="1">Plays a role in the regulation of phosphate uptake.</text>
</comment>
<comment type="subunit">
    <text evidence="1">Homodimer.</text>
</comment>
<comment type="subcellular location">
    <subcellularLocation>
        <location evidence="1">Cytoplasm</location>
    </subcellularLocation>
</comment>
<comment type="similarity">
    <text evidence="2">Belongs to the PhoU family.</text>
</comment>
<gene>
    <name type="primary">phoU1</name>
    <name type="ordered locus">TM_1260</name>
</gene>
<sequence length="232" mass="26937">MVDHVHFERELTLLKSDVSKMLFLVSESLNDAIESLETMNETLARKVLESDDMIDELNREIEEKAYQIIARYNPILKQLRYIITILKFSNDLERIGDLSCNIAEKCLFLSEEKIKFEMLKELKDMFGSTLKVVQDAFKAFVEEDVDLAFRLWKFDDVIDEMEKKIRRIVVERIREGNISAELALVYILIARDLERVGDHANNLCEEVIYIETGKNMKEFLRGVESGSEGADS</sequence>
<feature type="chain" id="PRO_0000155182" description="Phosphate-specific transport system accessory protein PhoU homolog 1">
    <location>
        <begin position="1"/>
        <end position="232"/>
    </location>
</feature>
<protein>
    <recommendedName>
        <fullName>Phosphate-specific transport system accessory protein PhoU homolog 1</fullName>
        <shortName>Pst system accessory protein PhoU homolog 1</shortName>
    </recommendedName>
</protein>
<organism>
    <name type="scientific">Thermotoga maritima (strain ATCC 43589 / DSM 3109 / JCM 10099 / NBRC 100826 / MSB8)</name>
    <dbReference type="NCBI Taxonomy" id="243274"/>
    <lineage>
        <taxon>Bacteria</taxon>
        <taxon>Thermotogati</taxon>
        <taxon>Thermotogota</taxon>
        <taxon>Thermotogae</taxon>
        <taxon>Thermotogales</taxon>
        <taxon>Thermotogaceae</taxon>
        <taxon>Thermotoga</taxon>
    </lineage>
</organism>
<dbReference type="EMBL" id="AE000512">
    <property type="protein sequence ID" value="AAD36334.1"/>
    <property type="molecule type" value="Genomic_DNA"/>
</dbReference>
<dbReference type="PIR" id="G72275">
    <property type="entry name" value="G72275"/>
</dbReference>
<dbReference type="RefSeq" id="NP_229065.1">
    <property type="nucleotide sequence ID" value="NC_000853.1"/>
</dbReference>
<dbReference type="SMR" id="Q9X0Y7"/>
<dbReference type="STRING" id="243274.TM_1260"/>
<dbReference type="PaxDb" id="243274-THEMA_08035"/>
<dbReference type="DNASU" id="898223"/>
<dbReference type="EnsemblBacteria" id="AAD36334">
    <property type="protein sequence ID" value="AAD36334"/>
    <property type="gene ID" value="TM_1260"/>
</dbReference>
<dbReference type="KEGG" id="tma:TM1260"/>
<dbReference type="KEGG" id="tmi:THEMA_08035"/>
<dbReference type="KEGG" id="tmw:THMA_1285"/>
<dbReference type="PATRIC" id="fig|243274.18.peg.1554"/>
<dbReference type="eggNOG" id="COG0704">
    <property type="taxonomic scope" value="Bacteria"/>
</dbReference>
<dbReference type="InParanoid" id="Q9X0Y7"/>
<dbReference type="OrthoDB" id="9814256at2"/>
<dbReference type="Proteomes" id="UP000008183">
    <property type="component" value="Chromosome"/>
</dbReference>
<dbReference type="GO" id="GO:0005737">
    <property type="term" value="C:cytoplasm"/>
    <property type="evidence" value="ECO:0000250"/>
    <property type="project" value="UniProtKB"/>
</dbReference>
<dbReference type="GO" id="GO:0042803">
    <property type="term" value="F:protein homodimerization activity"/>
    <property type="evidence" value="ECO:0000250"/>
    <property type="project" value="UniProtKB"/>
</dbReference>
<dbReference type="GO" id="GO:0030643">
    <property type="term" value="P:intracellular phosphate ion homeostasis"/>
    <property type="evidence" value="ECO:0007669"/>
    <property type="project" value="InterPro"/>
</dbReference>
<dbReference type="GO" id="GO:0045936">
    <property type="term" value="P:negative regulation of phosphate metabolic process"/>
    <property type="evidence" value="ECO:0000250"/>
    <property type="project" value="UniProtKB"/>
</dbReference>
<dbReference type="GO" id="GO:2000186">
    <property type="term" value="P:negative regulation of phosphate transmembrane transport"/>
    <property type="evidence" value="ECO:0000250"/>
    <property type="project" value="UniProtKB"/>
</dbReference>
<dbReference type="GO" id="GO:0006817">
    <property type="term" value="P:phosphate ion transport"/>
    <property type="evidence" value="ECO:0007669"/>
    <property type="project" value="UniProtKB-KW"/>
</dbReference>
<dbReference type="FunFam" id="1.20.58.220:FF:000004">
    <property type="entry name" value="Phosphate-specific transport system accessory protein PhoU"/>
    <property type="match status" value="1"/>
</dbReference>
<dbReference type="Gene3D" id="1.20.58.220">
    <property type="entry name" value="Phosphate transport system protein phou homolog 2, domain 2"/>
    <property type="match status" value="1"/>
</dbReference>
<dbReference type="InterPro" id="IPR028366">
    <property type="entry name" value="P_transport_PhoU"/>
</dbReference>
<dbReference type="InterPro" id="IPR038078">
    <property type="entry name" value="PhoU-like_sf"/>
</dbReference>
<dbReference type="InterPro" id="IPR026022">
    <property type="entry name" value="PhoU_dom"/>
</dbReference>
<dbReference type="NCBIfam" id="TIGR02135">
    <property type="entry name" value="phoU_full"/>
    <property type="match status" value="1"/>
</dbReference>
<dbReference type="PANTHER" id="PTHR42930">
    <property type="entry name" value="PHOSPHATE-SPECIFIC TRANSPORT SYSTEM ACCESSORY PROTEIN PHOU"/>
    <property type="match status" value="1"/>
</dbReference>
<dbReference type="PANTHER" id="PTHR42930:SF3">
    <property type="entry name" value="PHOSPHATE-SPECIFIC TRANSPORT SYSTEM ACCESSORY PROTEIN PHOU"/>
    <property type="match status" value="1"/>
</dbReference>
<dbReference type="Pfam" id="PF01895">
    <property type="entry name" value="PhoU"/>
    <property type="match status" value="2"/>
</dbReference>
<dbReference type="PIRSF" id="PIRSF003107">
    <property type="entry name" value="PhoU"/>
    <property type="match status" value="1"/>
</dbReference>
<dbReference type="SUPFAM" id="SSF109755">
    <property type="entry name" value="PhoU-like"/>
    <property type="match status" value="1"/>
</dbReference>
<accession>Q9X0Y7</accession>
<reference key="1">
    <citation type="journal article" date="1999" name="Nature">
        <title>Evidence for lateral gene transfer between Archaea and Bacteria from genome sequence of Thermotoga maritima.</title>
        <authorList>
            <person name="Nelson K.E."/>
            <person name="Clayton R.A."/>
            <person name="Gill S.R."/>
            <person name="Gwinn M.L."/>
            <person name="Dodson R.J."/>
            <person name="Haft D.H."/>
            <person name="Hickey E.K."/>
            <person name="Peterson J.D."/>
            <person name="Nelson W.C."/>
            <person name="Ketchum K.A."/>
            <person name="McDonald L.A."/>
            <person name="Utterback T.R."/>
            <person name="Malek J.A."/>
            <person name="Linher K.D."/>
            <person name="Garrett M.M."/>
            <person name="Stewart A.M."/>
            <person name="Cotton M.D."/>
            <person name="Pratt M.S."/>
            <person name="Phillips C.A."/>
            <person name="Richardson D.L."/>
            <person name="Heidelberg J.F."/>
            <person name="Sutton G.G."/>
            <person name="Fleischmann R.D."/>
            <person name="Eisen J.A."/>
            <person name="White O."/>
            <person name="Salzberg S.L."/>
            <person name="Smith H.O."/>
            <person name="Venter J.C."/>
            <person name="Fraser C.M."/>
        </authorList>
    </citation>
    <scope>NUCLEOTIDE SEQUENCE [LARGE SCALE GENOMIC DNA]</scope>
    <source>
        <strain>ATCC 43589 / DSM 3109 / JCM 10099 / NBRC 100826 / MSB8</strain>
    </source>
</reference>
<keyword id="KW-0963">Cytoplasm</keyword>
<keyword id="KW-0592">Phosphate transport</keyword>
<keyword id="KW-1185">Reference proteome</keyword>
<keyword id="KW-0813">Transport</keyword>
<proteinExistence type="inferred from homology"/>
<name>PHOU1_THEMA</name>
<evidence type="ECO:0000250" key="1"/>
<evidence type="ECO:0000305" key="2"/>